<name>BUB3_PONAB</name>
<sequence>MTGSNEFKLNQPPEDGISSVKFSPNTSQFLLVSSWDTSVRLYDVPANSMRLKYQHTGAVLDCAFYDPTHAWSGGLDHQLKMHDLNTDQENLVGTHDAPIRCVEYCPEVNVMATGSWDQTVKLWDPRTPCNAGTFSQPEKVYTLSVSGDRLIVGTAGRRVLVWDLRNMGYVQQRRESSLKYQTRCIRAFLNKQGYVLSSIEGRVAVEYLDPSPEVQKKKYAFKCHRLKENNIEQIYPVNAISFHNIHNTFATGGSDGFVNIWDPFNKKRLCQFHRYPTSIASLAFSNDGTTLAIASSYMYEMDDTEHPEDGIFIRQVTDAETKPKSPCT</sequence>
<keyword id="KW-0007">Acetylation</keyword>
<keyword id="KW-0013">ADP-ribosylation</keyword>
<keyword id="KW-0131">Cell cycle</keyword>
<keyword id="KW-0132">Cell division</keyword>
<keyword id="KW-0137">Centromere</keyword>
<keyword id="KW-0158">Chromosome</keyword>
<keyword id="KW-0159">Chromosome partition</keyword>
<keyword id="KW-1017">Isopeptide bond</keyword>
<keyword id="KW-0995">Kinetochore</keyword>
<keyword id="KW-0469">Meiosis</keyword>
<keyword id="KW-0498">Mitosis</keyword>
<keyword id="KW-0539">Nucleus</keyword>
<keyword id="KW-0597">Phosphoprotein</keyword>
<keyword id="KW-1185">Reference proteome</keyword>
<keyword id="KW-0677">Repeat</keyword>
<keyword id="KW-0832">Ubl conjugation</keyword>
<keyword id="KW-0853">WD repeat</keyword>
<comment type="function">
    <text evidence="1">Has a dual function in spindle-assembly checkpoint signaling and in promoting the establishment of correct kinetochore-microtubule (K-MT) attachments. Promotes the formation of stable end-on bipolar attachments. Necessary for kinetochore localization of BUB1. Regulates chromosome segregation during oocyte meiosis. The BUB1/BUB3 complex plays a role in the inhibition of anaphase-promoting complex or cyclosome (APC/C) when spindle-assembly checkpoint is activated and inhibits the ubiquitin ligase activity of APC/C by phosphorylating its activator CDC20. This complex can also phosphorylate MAD1L1 (By similarity).</text>
</comment>
<comment type="subunit">
    <text evidence="1">Interacts with BUB1 and BUBR1. The BUB1/BUB3 complex interacts with MAD1L1. Interacts with ZNF207/BuGZ; leading to promote stability and kinetochore loading of BUB3 (By similarity).</text>
</comment>
<comment type="subcellular location">
    <subcellularLocation>
        <location evidence="1">Nucleus</location>
    </subcellularLocation>
    <subcellularLocation>
        <location evidence="1">Chromosome</location>
        <location evidence="1">Centromere</location>
        <location evidence="1">Kinetochore</location>
    </subcellularLocation>
    <text evidence="1">Starts to localize at kinetochores in prometaphase I (Pro-MI) stage and maintains the localization until the metaphase I-anaphase I (MI-AI) transition.</text>
</comment>
<comment type="PTM">
    <text evidence="3">Poly-ADP-ribosylated by PARP1.</text>
</comment>
<comment type="PTM">
    <text evidence="2">Ubiquitinated by UBR5, promoting disassembly of the mitotic checkpoint complex from the APC/C complex.</text>
</comment>
<comment type="similarity">
    <text evidence="4">Belongs to the WD repeat BUB3 family.</text>
</comment>
<feature type="chain" id="PRO_0000050893" description="Mitotic checkpoint protein BUB3">
    <location>
        <begin position="1"/>
        <end position="328"/>
    </location>
</feature>
<feature type="repeat" description="WD 1">
    <location>
        <begin position="5"/>
        <end position="43"/>
    </location>
</feature>
<feature type="repeat" description="WD 2">
    <location>
        <begin position="46"/>
        <end position="83"/>
    </location>
</feature>
<feature type="repeat" description="WD 3">
    <location>
        <begin position="86"/>
        <end position="124"/>
    </location>
</feature>
<feature type="repeat" description="WD 4">
    <location>
        <begin position="128"/>
        <end position="163"/>
    </location>
</feature>
<feature type="repeat" description="WD 5">
    <location>
        <begin position="223"/>
        <end position="262"/>
    </location>
</feature>
<feature type="modified residue" description="N6-acetyllysine" evidence="2">
    <location>
        <position position="179"/>
    </location>
</feature>
<feature type="modified residue" description="Phosphoserine" evidence="2">
    <location>
        <position position="211"/>
    </location>
</feature>
<feature type="cross-link" description="Glycyl lysine isopeptide (Lys-Gly) (interchain with G-Cter in ubiquitin)" evidence="2">
    <location>
        <position position="216"/>
    </location>
</feature>
<protein>
    <recommendedName>
        <fullName>Mitotic checkpoint protein BUB3</fullName>
    </recommendedName>
</protein>
<proteinExistence type="evidence at transcript level"/>
<evidence type="ECO:0000250" key="1"/>
<evidence type="ECO:0000250" key="2">
    <source>
        <dbReference type="UniProtKB" id="O43684"/>
    </source>
</evidence>
<evidence type="ECO:0000250" key="3">
    <source>
        <dbReference type="UniProtKB" id="Q9WVA3"/>
    </source>
</evidence>
<evidence type="ECO:0000305" key="4"/>
<gene>
    <name type="primary">BUB3</name>
</gene>
<reference key="1">
    <citation type="submission" date="2004-11" db="EMBL/GenBank/DDBJ databases">
        <authorList>
            <consortium name="The German cDNA consortium"/>
        </authorList>
    </citation>
    <scope>NUCLEOTIDE SEQUENCE [LARGE SCALE MRNA]</scope>
    <source>
        <tissue>Brain cortex</tissue>
    </source>
</reference>
<accession>Q5RB58</accession>
<organism>
    <name type="scientific">Pongo abelii</name>
    <name type="common">Sumatran orangutan</name>
    <name type="synonym">Pongo pygmaeus abelii</name>
    <dbReference type="NCBI Taxonomy" id="9601"/>
    <lineage>
        <taxon>Eukaryota</taxon>
        <taxon>Metazoa</taxon>
        <taxon>Chordata</taxon>
        <taxon>Craniata</taxon>
        <taxon>Vertebrata</taxon>
        <taxon>Euteleostomi</taxon>
        <taxon>Mammalia</taxon>
        <taxon>Eutheria</taxon>
        <taxon>Euarchontoglires</taxon>
        <taxon>Primates</taxon>
        <taxon>Haplorrhini</taxon>
        <taxon>Catarrhini</taxon>
        <taxon>Hominidae</taxon>
        <taxon>Pongo</taxon>
    </lineage>
</organism>
<dbReference type="EMBL" id="CR858797">
    <property type="protein sequence ID" value="CAH91002.1"/>
    <property type="molecule type" value="mRNA"/>
</dbReference>
<dbReference type="RefSeq" id="NP_001125579.1">
    <property type="nucleotide sequence ID" value="NM_001132107.1"/>
</dbReference>
<dbReference type="SMR" id="Q5RB58"/>
<dbReference type="STRING" id="9601.ENSPPYP00000003192"/>
<dbReference type="GeneID" id="100172494"/>
<dbReference type="KEGG" id="pon:100172494"/>
<dbReference type="CTD" id="9184"/>
<dbReference type="eggNOG" id="KOG1036">
    <property type="taxonomic scope" value="Eukaryota"/>
</dbReference>
<dbReference type="InParanoid" id="Q5RB58"/>
<dbReference type="OrthoDB" id="10262475at2759"/>
<dbReference type="Proteomes" id="UP000001595">
    <property type="component" value="Unplaced"/>
</dbReference>
<dbReference type="GO" id="GO:0000776">
    <property type="term" value="C:kinetochore"/>
    <property type="evidence" value="ECO:0000250"/>
    <property type="project" value="UniProtKB"/>
</dbReference>
<dbReference type="GO" id="GO:0005634">
    <property type="term" value="C:nucleus"/>
    <property type="evidence" value="ECO:0007669"/>
    <property type="project" value="UniProtKB-SubCell"/>
</dbReference>
<dbReference type="GO" id="GO:0051301">
    <property type="term" value="P:cell division"/>
    <property type="evidence" value="ECO:0007669"/>
    <property type="project" value="UniProtKB-KW"/>
</dbReference>
<dbReference type="GO" id="GO:0007059">
    <property type="term" value="P:chromosome segregation"/>
    <property type="evidence" value="ECO:0007669"/>
    <property type="project" value="UniProtKB-KW"/>
</dbReference>
<dbReference type="GO" id="GO:0051321">
    <property type="term" value="P:meiotic cell cycle"/>
    <property type="evidence" value="ECO:0007669"/>
    <property type="project" value="UniProtKB-KW"/>
</dbReference>
<dbReference type="GO" id="GO:0051983">
    <property type="term" value="P:regulation of chromosome segregation"/>
    <property type="evidence" value="ECO:0000250"/>
    <property type="project" value="UniProtKB"/>
</dbReference>
<dbReference type="FunFam" id="2.130.10.10:FF:000047">
    <property type="entry name" value="Mitotic checkpoint protein bub3, putative"/>
    <property type="match status" value="1"/>
</dbReference>
<dbReference type="Gene3D" id="2.130.10.10">
    <property type="entry name" value="YVTN repeat-like/Quinoprotein amine dehydrogenase"/>
    <property type="match status" value="1"/>
</dbReference>
<dbReference type="InterPro" id="IPR020472">
    <property type="entry name" value="G-protein_beta_WD-40_rep"/>
</dbReference>
<dbReference type="InterPro" id="IPR015943">
    <property type="entry name" value="WD40/YVTN_repeat-like_dom_sf"/>
</dbReference>
<dbReference type="InterPro" id="IPR036322">
    <property type="entry name" value="WD40_repeat_dom_sf"/>
</dbReference>
<dbReference type="InterPro" id="IPR001680">
    <property type="entry name" value="WD40_rpt"/>
</dbReference>
<dbReference type="PANTHER" id="PTHR10971">
    <property type="entry name" value="MRNA EXPORT FACTOR AND BUB3"/>
    <property type="match status" value="1"/>
</dbReference>
<dbReference type="Pfam" id="PF00400">
    <property type="entry name" value="WD40"/>
    <property type="match status" value="3"/>
</dbReference>
<dbReference type="PRINTS" id="PR00320">
    <property type="entry name" value="GPROTEINBRPT"/>
</dbReference>
<dbReference type="SMART" id="SM00320">
    <property type="entry name" value="WD40"/>
    <property type="match status" value="6"/>
</dbReference>
<dbReference type="SUPFAM" id="SSF50978">
    <property type="entry name" value="WD40 repeat-like"/>
    <property type="match status" value="1"/>
</dbReference>
<dbReference type="PROSITE" id="PS50082">
    <property type="entry name" value="WD_REPEATS_2"/>
    <property type="match status" value="2"/>
</dbReference>
<dbReference type="PROSITE" id="PS50294">
    <property type="entry name" value="WD_REPEATS_REGION"/>
    <property type="match status" value="2"/>
</dbReference>